<dbReference type="EMBL" id="CP001227">
    <property type="protein sequence ID" value="ACR47028.1"/>
    <property type="molecule type" value="Genomic_DNA"/>
</dbReference>
<dbReference type="RefSeq" id="WP_012736339.1">
    <property type="nucleotide sequence ID" value="NC_012730.1"/>
</dbReference>
<dbReference type="SMR" id="C4K0C5"/>
<dbReference type="KEGG" id="rpk:RPR_00055"/>
<dbReference type="HOGENOM" id="CLU_061989_0_0_5"/>
<dbReference type="Proteomes" id="UP000005015">
    <property type="component" value="Chromosome"/>
</dbReference>
<dbReference type="GO" id="GO:0005829">
    <property type="term" value="C:cytosol"/>
    <property type="evidence" value="ECO:0007669"/>
    <property type="project" value="TreeGrafter"/>
</dbReference>
<dbReference type="GO" id="GO:0033194">
    <property type="term" value="P:response to hydroperoxide"/>
    <property type="evidence" value="ECO:0007669"/>
    <property type="project" value="TreeGrafter"/>
</dbReference>
<dbReference type="HAMAP" id="MF_00652">
    <property type="entry name" value="UPF0246"/>
    <property type="match status" value="1"/>
</dbReference>
<dbReference type="InterPro" id="IPR005583">
    <property type="entry name" value="YaaA"/>
</dbReference>
<dbReference type="PANTHER" id="PTHR30283:SF4">
    <property type="entry name" value="PEROXIDE STRESS RESISTANCE PROTEIN YAAA"/>
    <property type="match status" value="1"/>
</dbReference>
<dbReference type="PANTHER" id="PTHR30283">
    <property type="entry name" value="PEROXIDE STRESS RESPONSE PROTEIN YAAA"/>
    <property type="match status" value="1"/>
</dbReference>
<dbReference type="Pfam" id="PF03883">
    <property type="entry name" value="H2O2_YaaD"/>
    <property type="match status" value="1"/>
</dbReference>
<gene>
    <name type="ordered locus">RPR_00055</name>
</gene>
<protein>
    <recommendedName>
        <fullName evidence="1">UPF0246 protein RPR_00055</fullName>
    </recommendedName>
</protein>
<evidence type="ECO:0000255" key="1">
    <source>
        <dbReference type="HAMAP-Rule" id="MF_00652"/>
    </source>
</evidence>
<feature type="chain" id="PRO_1000212430" description="UPF0246 protein RPR_00055">
    <location>
        <begin position="1"/>
        <end position="248"/>
    </location>
</feature>
<comment type="similarity">
    <text evidence="1">Belongs to the UPF0246 family.</text>
</comment>
<sequence length="248" mass="28225">MFAIISSAKTLNFEKLAPKTELTIPMFLTLTNKLLSTLQSYSENQLSKIMNISAKLAHINKERFKDFDNQESKAAIFAYAGDVFNNIHIEKLTNHALNFLQSHLLIISGLYGVLKPLDTIKPYRLEMATKLNEINLTNFWQDEVTNYINKILAKQENKYLLNLASQEYSSVINPNKLKYQLVNVHFKENRNGKLSTIGINAKKARGAMVKVIANNLIDSPELLKNFSYLGYAFSTKHSSDNELVFIKS</sequence>
<organism>
    <name type="scientific">Rickettsia peacockii (strain Rustic)</name>
    <dbReference type="NCBI Taxonomy" id="562019"/>
    <lineage>
        <taxon>Bacteria</taxon>
        <taxon>Pseudomonadati</taxon>
        <taxon>Pseudomonadota</taxon>
        <taxon>Alphaproteobacteria</taxon>
        <taxon>Rickettsiales</taxon>
        <taxon>Rickettsiaceae</taxon>
        <taxon>Rickettsieae</taxon>
        <taxon>Rickettsia</taxon>
        <taxon>spotted fever group</taxon>
    </lineage>
</organism>
<name>Y055_RICPU</name>
<reference key="1">
    <citation type="journal article" date="2009" name="PLoS ONE">
        <title>Genome sequence of the endosymbiont Rickettsia peacockii and comparison with virulent Rickettsia rickettsii: identification of virulence factors.</title>
        <authorList>
            <person name="Felsheim R.F."/>
            <person name="Kurtti T.J."/>
            <person name="Munderloh U.G."/>
        </authorList>
    </citation>
    <scope>NUCLEOTIDE SEQUENCE [LARGE SCALE GENOMIC DNA]</scope>
    <source>
        <strain>Rustic</strain>
    </source>
</reference>
<proteinExistence type="inferred from homology"/>
<accession>C4K0C5</accession>